<comment type="function">
    <text evidence="1">An L-glutamate ligase that catalyzes the ATP-dependent post-translational addition of glutamate residues to the C-terminus of ribosomal protein bS6 (RpsF). Is also able to catalyze the synthesis of poly-alpha-glutamate in vitro, via ATP hydrolysis from unprotected glutamate as substrate. The number of glutamate residues added to either RpsF or to poly-alpha-glutamate changes with pH.</text>
</comment>
<comment type="cofactor">
    <cofactor evidence="1">
        <name>Mg(2+)</name>
        <dbReference type="ChEBI" id="CHEBI:18420"/>
    </cofactor>
    <cofactor evidence="1">
        <name>Mn(2+)</name>
        <dbReference type="ChEBI" id="CHEBI:29035"/>
    </cofactor>
    <text evidence="1">Binds 2 magnesium or manganese ions per subunit.</text>
</comment>
<comment type="similarity">
    <text evidence="1">Belongs to the RimK family.</text>
</comment>
<accession>Q3Z3T2</accession>
<reference key="1">
    <citation type="journal article" date="2005" name="Nucleic Acids Res.">
        <title>Genome dynamics and diversity of Shigella species, the etiologic agents of bacillary dysentery.</title>
        <authorList>
            <person name="Yang F."/>
            <person name="Yang J."/>
            <person name="Zhang X."/>
            <person name="Chen L."/>
            <person name="Jiang Y."/>
            <person name="Yan Y."/>
            <person name="Tang X."/>
            <person name="Wang J."/>
            <person name="Xiong Z."/>
            <person name="Dong J."/>
            <person name="Xue Y."/>
            <person name="Zhu Y."/>
            <person name="Xu X."/>
            <person name="Sun L."/>
            <person name="Chen S."/>
            <person name="Nie H."/>
            <person name="Peng J."/>
            <person name="Xu J."/>
            <person name="Wang Y."/>
            <person name="Yuan Z."/>
            <person name="Wen Y."/>
            <person name="Yao Z."/>
            <person name="Shen Y."/>
            <person name="Qiang B."/>
            <person name="Hou Y."/>
            <person name="Yu J."/>
            <person name="Jin Q."/>
        </authorList>
    </citation>
    <scope>NUCLEOTIDE SEQUENCE [LARGE SCALE GENOMIC DNA]</scope>
    <source>
        <strain>Ss046</strain>
    </source>
</reference>
<feature type="chain" id="PRO_0000205485" description="Ribosomal protein bS6--L-glutamate ligase">
    <location>
        <begin position="1"/>
        <end position="300"/>
    </location>
</feature>
<feature type="domain" description="ATP-grasp" evidence="1">
    <location>
        <begin position="104"/>
        <end position="287"/>
    </location>
</feature>
<feature type="binding site" evidence="1">
    <location>
        <position position="141"/>
    </location>
    <ligand>
        <name>ATP</name>
        <dbReference type="ChEBI" id="CHEBI:30616"/>
    </ligand>
</feature>
<feature type="binding site" evidence="1">
    <location>
        <begin position="178"/>
        <end position="179"/>
    </location>
    <ligand>
        <name>ATP</name>
        <dbReference type="ChEBI" id="CHEBI:30616"/>
    </ligand>
</feature>
<feature type="binding site" evidence="1">
    <location>
        <position position="187"/>
    </location>
    <ligand>
        <name>ATP</name>
        <dbReference type="ChEBI" id="CHEBI:30616"/>
    </ligand>
</feature>
<feature type="binding site" evidence="1">
    <location>
        <begin position="211"/>
        <end position="213"/>
    </location>
    <ligand>
        <name>ATP</name>
        <dbReference type="ChEBI" id="CHEBI:30616"/>
    </ligand>
</feature>
<feature type="binding site" evidence="1">
    <location>
        <position position="248"/>
    </location>
    <ligand>
        <name>Mg(2+)</name>
        <dbReference type="ChEBI" id="CHEBI:18420"/>
        <label>1</label>
    </ligand>
</feature>
<feature type="binding site" evidence="1">
    <location>
        <position position="248"/>
    </location>
    <ligand>
        <name>Mn(2+)</name>
        <dbReference type="ChEBI" id="CHEBI:29035"/>
        <label>1</label>
    </ligand>
</feature>
<feature type="binding site" evidence="1">
    <location>
        <position position="260"/>
    </location>
    <ligand>
        <name>Mg(2+)</name>
        <dbReference type="ChEBI" id="CHEBI:18420"/>
        <label>1</label>
    </ligand>
</feature>
<feature type="binding site" evidence="1">
    <location>
        <position position="260"/>
    </location>
    <ligand>
        <name>Mg(2+)</name>
        <dbReference type="ChEBI" id="CHEBI:18420"/>
        <label>2</label>
    </ligand>
</feature>
<feature type="binding site" evidence="1">
    <location>
        <position position="260"/>
    </location>
    <ligand>
        <name>Mn(2+)</name>
        <dbReference type="ChEBI" id="CHEBI:29035"/>
        <label>1</label>
    </ligand>
</feature>
<feature type="binding site" evidence="1">
    <location>
        <position position="260"/>
    </location>
    <ligand>
        <name>Mn(2+)</name>
        <dbReference type="ChEBI" id="CHEBI:29035"/>
        <label>2</label>
    </ligand>
</feature>
<feature type="binding site" evidence="1">
    <location>
        <position position="262"/>
    </location>
    <ligand>
        <name>Mg(2+)</name>
        <dbReference type="ChEBI" id="CHEBI:18420"/>
        <label>2</label>
    </ligand>
</feature>
<feature type="binding site" evidence="1">
    <location>
        <position position="262"/>
    </location>
    <ligand>
        <name>Mn(2+)</name>
        <dbReference type="ChEBI" id="CHEBI:29035"/>
        <label>2</label>
    </ligand>
</feature>
<gene>
    <name evidence="1" type="primary">rimK</name>
    <name type="ordered locus">SSON_0837</name>
</gene>
<sequence length="300" mass="32436">MKIAILSRDGTLYSCKRLREAAIQRGHLVEILDPLSCYMNINPAASSIHYKGRKLPHFDAVIPRIGTAITFYGTAALRQFEMLGSYPLNESVAIARARDKLRSMQLLARQGIDLPVTGIAHSPDDTSDLIDMVGGAPLVVKLVEGTQGIGVVLAETRQAAESVIDAFRGLNAHILVQEYIKEAQGCDIRCLVVGDEVVAAIERRAKEGDFRSNLHRGGAASVASITPQEREIAIKAARTMALDVAGVDILRANRGPLVMEVNASPGLEGIEKTTGIDIAGKMIRWIERHATTEYCLKTGG</sequence>
<evidence type="ECO:0000255" key="1">
    <source>
        <dbReference type="HAMAP-Rule" id="MF_01552"/>
    </source>
</evidence>
<protein>
    <recommendedName>
        <fullName evidence="1">Ribosomal protein bS6--L-glutamate ligase</fullName>
        <ecNumber evidence="1">6.3.2.-</ecNumber>
    </recommendedName>
    <alternativeName>
        <fullName evidence="1">Poly-alpha-glutamate synthase</fullName>
    </alternativeName>
    <alternativeName>
        <fullName evidence="1">Ribosomal protein bS6 modification protein</fullName>
    </alternativeName>
</protein>
<keyword id="KW-0067">ATP-binding</keyword>
<keyword id="KW-0436">Ligase</keyword>
<keyword id="KW-0460">Magnesium</keyword>
<keyword id="KW-0464">Manganese</keyword>
<keyword id="KW-0479">Metal-binding</keyword>
<keyword id="KW-0547">Nucleotide-binding</keyword>
<keyword id="KW-0648">Protein biosynthesis</keyword>
<keyword id="KW-1185">Reference proteome</keyword>
<name>RIMK_SHISS</name>
<dbReference type="EC" id="6.3.2.-" evidence="1"/>
<dbReference type="EMBL" id="CP000038">
    <property type="protein sequence ID" value="AAZ87580.1"/>
    <property type="molecule type" value="Genomic_DNA"/>
</dbReference>
<dbReference type="RefSeq" id="WP_000684321.1">
    <property type="nucleotide sequence ID" value="NC_007384.1"/>
</dbReference>
<dbReference type="SMR" id="Q3Z3T2"/>
<dbReference type="GeneID" id="93776570"/>
<dbReference type="KEGG" id="ssn:SSON_0837"/>
<dbReference type="HOGENOM" id="CLU_054353_0_1_6"/>
<dbReference type="Proteomes" id="UP000002529">
    <property type="component" value="Chromosome"/>
</dbReference>
<dbReference type="GO" id="GO:0005737">
    <property type="term" value="C:cytoplasm"/>
    <property type="evidence" value="ECO:0007669"/>
    <property type="project" value="TreeGrafter"/>
</dbReference>
<dbReference type="GO" id="GO:0005524">
    <property type="term" value="F:ATP binding"/>
    <property type="evidence" value="ECO:0007669"/>
    <property type="project" value="UniProtKB-UniRule"/>
</dbReference>
<dbReference type="GO" id="GO:0046872">
    <property type="term" value="F:metal ion binding"/>
    <property type="evidence" value="ECO:0007669"/>
    <property type="project" value="UniProtKB-KW"/>
</dbReference>
<dbReference type="GO" id="GO:0018169">
    <property type="term" value="F:ribosomal S6-glutamic acid ligase activity"/>
    <property type="evidence" value="ECO:0007669"/>
    <property type="project" value="UniProtKB-UniRule"/>
</dbReference>
<dbReference type="GO" id="GO:0036211">
    <property type="term" value="P:protein modification process"/>
    <property type="evidence" value="ECO:0007669"/>
    <property type="project" value="InterPro"/>
</dbReference>
<dbReference type="GO" id="GO:0009432">
    <property type="term" value="P:SOS response"/>
    <property type="evidence" value="ECO:0007669"/>
    <property type="project" value="TreeGrafter"/>
</dbReference>
<dbReference type="GO" id="GO:0006412">
    <property type="term" value="P:translation"/>
    <property type="evidence" value="ECO:0007669"/>
    <property type="project" value="UniProtKB-KW"/>
</dbReference>
<dbReference type="FunFam" id="3.40.50.20:FF:000004">
    <property type="entry name" value="Probable alpha-L-glutamate ligase"/>
    <property type="match status" value="1"/>
</dbReference>
<dbReference type="FunFam" id="3.30.1490.20:FF:000005">
    <property type="entry name" value="Probable alpha-L-glutamate ligase 1"/>
    <property type="match status" value="1"/>
</dbReference>
<dbReference type="FunFam" id="3.30.470.20:FF:000016">
    <property type="entry name" value="Ribosomal protein S6--L-glutamate ligase"/>
    <property type="match status" value="1"/>
</dbReference>
<dbReference type="Gene3D" id="3.40.50.20">
    <property type="match status" value="1"/>
</dbReference>
<dbReference type="Gene3D" id="3.30.1490.20">
    <property type="entry name" value="ATP-grasp fold, A domain"/>
    <property type="match status" value="1"/>
</dbReference>
<dbReference type="Gene3D" id="3.30.470.20">
    <property type="entry name" value="ATP-grasp fold, B domain"/>
    <property type="match status" value="1"/>
</dbReference>
<dbReference type="HAMAP" id="MF_01552">
    <property type="entry name" value="RimK"/>
    <property type="match status" value="1"/>
</dbReference>
<dbReference type="InterPro" id="IPR011761">
    <property type="entry name" value="ATP-grasp"/>
</dbReference>
<dbReference type="InterPro" id="IPR013651">
    <property type="entry name" value="ATP-grasp_RimK-type"/>
</dbReference>
<dbReference type="InterPro" id="IPR013815">
    <property type="entry name" value="ATP_grasp_subdomain_1"/>
</dbReference>
<dbReference type="InterPro" id="IPR023533">
    <property type="entry name" value="RimK"/>
</dbReference>
<dbReference type="InterPro" id="IPR041107">
    <property type="entry name" value="Rimk_N"/>
</dbReference>
<dbReference type="InterPro" id="IPR004666">
    <property type="entry name" value="Rp_bS6_RimK/Lys_biosynth_LsyX"/>
</dbReference>
<dbReference type="NCBIfam" id="NF007764">
    <property type="entry name" value="PRK10446.1"/>
    <property type="match status" value="1"/>
</dbReference>
<dbReference type="NCBIfam" id="TIGR00768">
    <property type="entry name" value="rimK_fam"/>
    <property type="match status" value="1"/>
</dbReference>
<dbReference type="PANTHER" id="PTHR21621:SF7">
    <property type="entry name" value="RIBOSOMAL PROTEIN BS6--L-GLUTAMATE LIGASE"/>
    <property type="match status" value="1"/>
</dbReference>
<dbReference type="PANTHER" id="PTHR21621">
    <property type="entry name" value="RIBOSOMAL PROTEIN S6 MODIFICATION PROTEIN"/>
    <property type="match status" value="1"/>
</dbReference>
<dbReference type="Pfam" id="PF08443">
    <property type="entry name" value="RimK"/>
    <property type="match status" value="1"/>
</dbReference>
<dbReference type="Pfam" id="PF18030">
    <property type="entry name" value="Rimk_N"/>
    <property type="match status" value="1"/>
</dbReference>
<dbReference type="SUPFAM" id="SSF56059">
    <property type="entry name" value="Glutathione synthetase ATP-binding domain-like"/>
    <property type="match status" value="1"/>
</dbReference>
<dbReference type="PROSITE" id="PS50975">
    <property type="entry name" value="ATP_GRASP"/>
    <property type="match status" value="1"/>
</dbReference>
<organism>
    <name type="scientific">Shigella sonnei (strain Ss046)</name>
    <dbReference type="NCBI Taxonomy" id="300269"/>
    <lineage>
        <taxon>Bacteria</taxon>
        <taxon>Pseudomonadati</taxon>
        <taxon>Pseudomonadota</taxon>
        <taxon>Gammaproteobacteria</taxon>
        <taxon>Enterobacterales</taxon>
        <taxon>Enterobacteriaceae</taxon>
        <taxon>Shigella</taxon>
    </lineage>
</organism>
<proteinExistence type="inferred from homology"/>